<proteinExistence type="inferred from homology"/>
<reference key="1">
    <citation type="journal article" date="2000" name="Nature">
        <title>Complete DNA sequence of a serogroup A strain of Neisseria meningitidis Z2491.</title>
        <authorList>
            <person name="Parkhill J."/>
            <person name="Achtman M."/>
            <person name="James K.D."/>
            <person name="Bentley S.D."/>
            <person name="Churcher C.M."/>
            <person name="Klee S.R."/>
            <person name="Morelli G."/>
            <person name="Basham D."/>
            <person name="Brown D."/>
            <person name="Chillingworth T."/>
            <person name="Davies R.M."/>
            <person name="Davis P."/>
            <person name="Devlin K."/>
            <person name="Feltwell T."/>
            <person name="Hamlin N."/>
            <person name="Holroyd S."/>
            <person name="Jagels K."/>
            <person name="Leather S."/>
            <person name="Moule S."/>
            <person name="Mungall K.L."/>
            <person name="Quail M.A."/>
            <person name="Rajandream M.A."/>
            <person name="Rutherford K.M."/>
            <person name="Simmonds M."/>
            <person name="Skelton J."/>
            <person name="Whitehead S."/>
            <person name="Spratt B.G."/>
            <person name="Barrell B.G."/>
        </authorList>
    </citation>
    <scope>NUCLEOTIDE SEQUENCE [LARGE SCALE GENOMIC DNA]</scope>
    <source>
        <strain>DSM 15465 / Z2491</strain>
    </source>
</reference>
<keyword id="KW-0067">ATP-binding</keyword>
<keyword id="KW-0119">Carbohydrate metabolism</keyword>
<keyword id="KW-0418">Kinase</keyword>
<keyword id="KW-0547">Nucleotide-binding</keyword>
<keyword id="KW-0808">Transferase</keyword>
<feature type="chain" id="PRO_0000250014" description="Anhydro-N-acetylmuramic acid kinase">
    <location>
        <begin position="1"/>
        <end position="367"/>
    </location>
</feature>
<feature type="binding site" evidence="1">
    <location>
        <begin position="13"/>
        <end position="20"/>
    </location>
    <ligand>
        <name>ATP</name>
        <dbReference type="ChEBI" id="CHEBI:30616"/>
    </ligand>
</feature>
<organism>
    <name type="scientific">Neisseria meningitidis serogroup A / serotype 4A (strain DSM 15465 / Z2491)</name>
    <dbReference type="NCBI Taxonomy" id="122587"/>
    <lineage>
        <taxon>Bacteria</taxon>
        <taxon>Pseudomonadati</taxon>
        <taxon>Pseudomonadota</taxon>
        <taxon>Betaproteobacteria</taxon>
        <taxon>Neisseriales</taxon>
        <taxon>Neisseriaceae</taxon>
        <taxon>Neisseria</taxon>
    </lineage>
</organism>
<comment type="function">
    <text evidence="1">Catalyzes the specific phosphorylation of 1,6-anhydro-N-acetylmuramic acid (anhMurNAc) with the simultaneous cleavage of the 1,6-anhydro ring, generating MurNAc-6-P. Is required for the utilization of anhMurNAc either imported from the medium or derived from its own cell wall murein, and thus plays a role in cell wall recycling.</text>
</comment>
<comment type="catalytic activity">
    <reaction evidence="1">
        <text>1,6-anhydro-N-acetyl-beta-muramate + ATP + H2O = N-acetyl-D-muramate 6-phosphate + ADP + H(+)</text>
        <dbReference type="Rhea" id="RHEA:24952"/>
        <dbReference type="ChEBI" id="CHEBI:15377"/>
        <dbReference type="ChEBI" id="CHEBI:15378"/>
        <dbReference type="ChEBI" id="CHEBI:30616"/>
        <dbReference type="ChEBI" id="CHEBI:58690"/>
        <dbReference type="ChEBI" id="CHEBI:58722"/>
        <dbReference type="ChEBI" id="CHEBI:456216"/>
        <dbReference type="EC" id="2.7.1.170"/>
    </reaction>
</comment>
<comment type="pathway">
    <text evidence="1">Amino-sugar metabolism; 1,6-anhydro-N-acetylmuramate degradation.</text>
</comment>
<comment type="pathway">
    <text evidence="1">Cell wall biogenesis; peptidoglycan recycling.</text>
</comment>
<comment type="similarity">
    <text evidence="1">Belongs to the anhydro-N-acetylmuramic acid kinase family.</text>
</comment>
<name>ANMK_NEIMA</name>
<dbReference type="EC" id="2.7.1.170" evidence="1"/>
<dbReference type="EMBL" id="AL157959">
    <property type="protein sequence ID" value="CAM09210.1"/>
    <property type="molecule type" value="Genomic_DNA"/>
</dbReference>
<dbReference type="PIR" id="F81782">
    <property type="entry name" value="F81782"/>
</dbReference>
<dbReference type="SMR" id="Q9JSW1"/>
<dbReference type="EnsemblBacteria" id="CAM09210">
    <property type="protein sequence ID" value="CAM09210"/>
    <property type="gene ID" value="NMA2111"/>
</dbReference>
<dbReference type="KEGG" id="nma:NMA2111"/>
<dbReference type="HOGENOM" id="CLU_038782_0_0_4"/>
<dbReference type="UniPathway" id="UPA00343"/>
<dbReference type="UniPathway" id="UPA00544"/>
<dbReference type="Proteomes" id="UP000000626">
    <property type="component" value="Chromosome"/>
</dbReference>
<dbReference type="GO" id="GO:0005524">
    <property type="term" value="F:ATP binding"/>
    <property type="evidence" value="ECO:0007669"/>
    <property type="project" value="UniProtKB-UniRule"/>
</dbReference>
<dbReference type="GO" id="GO:0016301">
    <property type="term" value="F:kinase activity"/>
    <property type="evidence" value="ECO:0007669"/>
    <property type="project" value="UniProtKB-KW"/>
</dbReference>
<dbReference type="GO" id="GO:0016773">
    <property type="term" value="F:phosphotransferase activity, alcohol group as acceptor"/>
    <property type="evidence" value="ECO:0007669"/>
    <property type="project" value="UniProtKB-UniRule"/>
</dbReference>
<dbReference type="GO" id="GO:0097175">
    <property type="term" value="P:1,6-anhydro-N-acetyl-beta-muramic acid catabolic process"/>
    <property type="evidence" value="ECO:0007669"/>
    <property type="project" value="UniProtKB-UniRule"/>
</dbReference>
<dbReference type="GO" id="GO:0006040">
    <property type="term" value="P:amino sugar metabolic process"/>
    <property type="evidence" value="ECO:0007669"/>
    <property type="project" value="InterPro"/>
</dbReference>
<dbReference type="GO" id="GO:0009254">
    <property type="term" value="P:peptidoglycan turnover"/>
    <property type="evidence" value="ECO:0007669"/>
    <property type="project" value="UniProtKB-UniRule"/>
</dbReference>
<dbReference type="CDD" id="cd24050">
    <property type="entry name" value="ASKHA_NBD_ANMK"/>
    <property type="match status" value="1"/>
</dbReference>
<dbReference type="Gene3D" id="3.30.420.40">
    <property type="match status" value="2"/>
</dbReference>
<dbReference type="HAMAP" id="MF_01270">
    <property type="entry name" value="AnhMurNAc_kinase"/>
    <property type="match status" value="1"/>
</dbReference>
<dbReference type="InterPro" id="IPR005338">
    <property type="entry name" value="Anhydro_N_Ac-Mur_kinase"/>
</dbReference>
<dbReference type="InterPro" id="IPR043129">
    <property type="entry name" value="ATPase_NBD"/>
</dbReference>
<dbReference type="NCBIfam" id="NF007139">
    <property type="entry name" value="PRK09585.1-3"/>
    <property type="match status" value="1"/>
</dbReference>
<dbReference type="PANTHER" id="PTHR30605">
    <property type="entry name" value="ANHYDRO-N-ACETYLMURAMIC ACID KINASE"/>
    <property type="match status" value="1"/>
</dbReference>
<dbReference type="PANTHER" id="PTHR30605:SF0">
    <property type="entry name" value="ANHYDRO-N-ACETYLMURAMIC ACID KINASE"/>
    <property type="match status" value="1"/>
</dbReference>
<dbReference type="Pfam" id="PF03702">
    <property type="entry name" value="AnmK"/>
    <property type="match status" value="1"/>
</dbReference>
<dbReference type="SUPFAM" id="SSF53067">
    <property type="entry name" value="Actin-like ATPase domain"/>
    <property type="match status" value="1"/>
</dbReference>
<evidence type="ECO:0000255" key="1">
    <source>
        <dbReference type="HAMAP-Rule" id="MF_01270"/>
    </source>
</evidence>
<sequence length="367" mass="40086">MMETQLYIGIMSGTSMDGADAVLIRMDGGKWLGAEGHAFTPYPGRLRRKLLDLQDTGADELHRSRMLSQELSRLYAQTAAELLCSQNLAPSDITALGCHGQTVRHAPEHSYSVQLADLPLLAERTQIFTVGDFRSRDLAAGGQGAPLVPAFHEALFRDDRETRAVLNIGGIANISVLPPDAPAFGFDTGPGNMLMDAWMQAHWQLPYDKNGAKAAQGNILPQLLDRLLAHPYFAQPHPKSTGRELFALNWLETYLDGGENRYDVLRTLSRFTAQTVFDAVSHAAADARQMYICGGGIRNPVLMADLAECFGTRVSLHSTAELNLDPQWVEAAAFAWMAACWVNRIPGSPHKATGASKPCILGAGYYY</sequence>
<protein>
    <recommendedName>
        <fullName evidence="1">Anhydro-N-acetylmuramic acid kinase</fullName>
        <ecNumber evidence="1">2.7.1.170</ecNumber>
    </recommendedName>
    <alternativeName>
        <fullName evidence="1">AnhMurNAc kinase</fullName>
    </alternativeName>
</protein>
<accession>Q9JSW1</accession>
<accession>A1ITU1</accession>
<gene>
    <name evidence="1" type="primary">anmK</name>
    <name type="ordered locus">NMA2111</name>
</gene>